<organism>
    <name type="scientific">Streptococcus thermophilus (strain CNRZ 1066)</name>
    <dbReference type="NCBI Taxonomy" id="299768"/>
    <lineage>
        <taxon>Bacteria</taxon>
        <taxon>Bacillati</taxon>
        <taxon>Bacillota</taxon>
        <taxon>Bacilli</taxon>
        <taxon>Lactobacillales</taxon>
        <taxon>Streptococcaceae</taxon>
        <taxon>Streptococcus</taxon>
    </lineage>
</organism>
<name>RL332_STRT1</name>
<comment type="similarity">
    <text evidence="1">Belongs to the bacterial ribosomal protein bL33 family.</text>
</comment>
<proteinExistence type="inferred from homology"/>
<accession>Q5M0N7</accession>
<gene>
    <name evidence="1" type="primary">rpmG2</name>
    <name type="synonym">rpmGA</name>
    <name type="ordered locus">str0623</name>
</gene>
<keyword id="KW-0687">Ribonucleoprotein</keyword>
<keyword id="KW-0689">Ribosomal protein</keyword>
<protein>
    <recommendedName>
        <fullName evidence="1">Large ribosomal subunit protein bL33B</fullName>
    </recommendedName>
    <alternativeName>
        <fullName evidence="1">50S ribosomal protein L33 2</fullName>
    </alternativeName>
</protein>
<dbReference type="EMBL" id="CP000024">
    <property type="protein sequence ID" value="AAV62219.1"/>
    <property type="molecule type" value="Genomic_DNA"/>
</dbReference>
<dbReference type="SMR" id="Q5M0N7"/>
<dbReference type="KEGG" id="stc:str0623"/>
<dbReference type="HOGENOM" id="CLU_190949_0_2_9"/>
<dbReference type="GO" id="GO:0005737">
    <property type="term" value="C:cytoplasm"/>
    <property type="evidence" value="ECO:0007669"/>
    <property type="project" value="UniProtKB-ARBA"/>
</dbReference>
<dbReference type="GO" id="GO:1990904">
    <property type="term" value="C:ribonucleoprotein complex"/>
    <property type="evidence" value="ECO:0007669"/>
    <property type="project" value="UniProtKB-KW"/>
</dbReference>
<dbReference type="GO" id="GO:0005840">
    <property type="term" value="C:ribosome"/>
    <property type="evidence" value="ECO:0007669"/>
    <property type="project" value="UniProtKB-KW"/>
</dbReference>
<dbReference type="GO" id="GO:0003735">
    <property type="term" value="F:structural constituent of ribosome"/>
    <property type="evidence" value="ECO:0007669"/>
    <property type="project" value="InterPro"/>
</dbReference>
<dbReference type="GO" id="GO:0006412">
    <property type="term" value="P:translation"/>
    <property type="evidence" value="ECO:0007669"/>
    <property type="project" value="UniProtKB-UniRule"/>
</dbReference>
<dbReference type="Gene3D" id="2.20.28.120">
    <property type="entry name" value="Ribosomal protein L33"/>
    <property type="match status" value="1"/>
</dbReference>
<dbReference type="HAMAP" id="MF_00294">
    <property type="entry name" value="Ribosomal_bL33"/>
    <property type="match status" value="1"/>
</dbReference>
<dbReference type="InterPro" id="IPR001705">
    <property type="entry name" value="Ribosomal_bL33"/>
</dbReference>
<dbReference type="InterPro" id="IPR018264">
    <property type="entry name" value="Ribosomal_bL33_CS"/>
</dbReference>
<dbReference type="InterPro" id="IPR038584">
    <property type="entry name" value="Ribosomal_bL33_sf"/>
</dbReference>
<dbReference type="InterPro" id="IPR011332">
    <property type="entry name" value="Ribosomal_zn-bd"/>
</dbReference>
<dbReference type="NCBIfam" id="NF001764">
    <property type="entry name" value="PRK00504.1"/>
    <property type="match status" value="1"/>
</dbReference>
<dbReference type="NCBIfam" id="NF001860">
    <property type="entry name" value="PRK00595.1"/>
    <property type="match status" value="1"/>
</dbReference>
<dbReference type="NCBIfam" id="TIGR01023">
    <property type="entry name" value="rpmG_bact"/>
    <property type="match status" value="1"/>
</dbReference>
<dbReference type="PANTHER" id="PTHR43168">
    <property type="entry name" value="50S RIBOSOMAL PROTEIN L33, CHLOROPLASTIC"/>
    <property type="match status" value="1"/>
</dbReference>
<dbReference type="PANTHER" id="PTHR43168:SF6">
    <property type="entry name" value="LARGE RIBOSOMAL SUBUNIT PROTEIN BL33A"/>
    <property type="match status" value="1"/>
</dbReference>
<dbReference type="Pfam" id="PF00471">
    <property type="entry name" value="Ribosomal_L33"/>
    <property type="match status" value="1"/>
</dbReference>
<dbReference type="SUPFAM" id="SSF57829">
    <property type="entry name" value="Zn-binding ribosomal proteins"/>
    <property type="match status" value="1"/>
</dbReference>
<dbReference type="PROSITE" id="PS00582">
    <property type="entry name" value="RIBOSOMAL_L33"/>
    <property type="match status" value="1"/>
</dbReference>
<reference key="1">
    <citation type="journal article" date="2004" name="Nat. Biotechnol.">
        <title>Complete sequence and comparative genome analysis of the dairy bacterium Streptococcus thermophilus.</title>
        <authorList>
            <person name="Bolotin A."/>
            <person name="Quinquis B."/>
            <person name="Renault P."/>
            <person name="Sorokin A."/>
            <person name="Ehrlich S.D."/>
            <person name="Kulakauskas S."/>
            <person name="Lapidus A."/>
            <person name="Goltsman E."/>
            <person name="Mazur M."/>
            <person name="Pusch G.D."/>
            <person name="Fonstein M."/>
            <person name="Overbeek R."/>
            <person name="Kyprides N."/>
            <person name="Purnelle B."/>
            <person name="Prozzi D."/>
            <person name="Ngui K."/>
            <person name="Masuy D."/>
            <person name="Hancy F."/>
            <person name="Burteau S."/>
            <person name="Boutry M."/>
            <person name="Delcour J."/>
            <person name="Goffeau A."/>
            <person name="Hols P."/>
        </authorList>
    </citation>
    <scope>NUCLEOTIDE SEQUENCE [LARGE SCALE GENOMIC DNA]</scope>
    <source>
        <strain>CNRZ 1066</strain>
    </source>
</reference>
<evidence type="ECO:0000255" key="1">
    <source>
        <dbReference type="HAMAP-Rule" id="MF_00294"/>
    </source>
</evidence>
<sequence>MRVKINLKCSECGSLNYLTSKNKQNHPEKIQVPKFCPKDRKVTLHVES</sequence>
<feature type="chain" id="PRO_0000356748" description="Large ribosomal subunit protein bL33B">
    <location>
        <begin position="1"/>
        <end position="48"/>
    </location>
</feature>